<feature type="chain" id="PRO_0000112658" description="Acetylglutamate kinase">
    <location>
        <begin position="1"/>
        <end position="258"/>
    </location>
</feature>
<feature type="binding site" evidence="1">
    <location>
        <begin position="44"/>
        <end position="45"/>
    </location>
    <ligand>
        <name>substrate</name>
    </ligand>
</feature>
<feature type="binding site" evidence="1">
    <location>
        <position position="66"/>
    </location>
    <ligand>
        <name>substrate</name>
    </ligand>
</feature>
<feature type="binding site" evidence="1">
    <location>
        <position position="158"/>
    </location>
    <ligand>
        <name>substrate</name>
    </ligand>
</feature>
<feature type="binding site" evidence="1">
    <location>
        <begin position="181"/>
        <end position="186"/>
    </location>
    <ligand>
        <name>ATP</name>
        <dbReference type="ChEBI" id="CHEBI:30616"/>
    </ligand>
</feature>
<feature type="binding site" evidence="1">
    <location>
        <begin position="209"/>
        <end position="211"/>
    </location>
    <ligand>
        <name>ATP</name>
        <dbReference type="ChEBI" id="CHEBI:30616"/>
    </ligand>
</feature>
<feature type="site" description="Transition state stabilizer" evidence="1">
    <location>
        <position position="8"/>
    </location>
</feature>
<feature type="site" description="Transition state stabilizer" evidence="1">
    <location>
        <position position="217"/>
    </location>
</feature>
<gene>
    <name evidence="1" type="primary">argB</name>
    <name type="ordered locus">STM4122</name>
</gene>
<comment type="function">
    <text evidence="1">Catalyzes the ATP-dependent phosphorylation of N-acetyl-L-glutamate.</text>
</comment>
<comment type="catalytic activity">
    <reaction evidence="1">
        <text>N-acetyl-L-glutamate + ATP = N-acetyl-L-glutamyl 5-phosphate + ADP</text>
        <dbReference type="Rhea" id="RHEA:14629"/>
        <dbReference type="ChEBI" id="CHEBI:30616"/>
        <dbReference type="ChEBI" id="CHEBI:44337"/>
        <dbReference type="ChEBI" id="CHEBI:57936"/>
        <dbReference type="ChEBI" id="CHEBI:456216"/>
        <dbReference type="EC" id="2.7.2.8"/>
    </reaction>
</comment>
<comment type="pathway">
    <text evidence="1">Amino-acid biosynthesis; L-arginine biosynthesis; N(2)-acetyl-L-ornithine from L-glutamate: step 2/4.</text>
</comment>
<comment type="subunit">
    <text evidence="1">Homodimer.</text>
</comment>
<comment type="subcellular location">
    <subcellularLocation>
        <location evidence="1">Cytoplasm</location>
    </subcellularLocation>
</comment>
<comment type="similarity">
    <text evidence="1">Belongs to the acetylglutamate kinase family. ArgB subfamily.</text>
</comment>
<keyword id="KW-0028">Amino-acid biosynthesis</keyword>
<keyword id="KW-0055">Arginine biosynthesis</keyword>
<keyword id="KW-0067">ATP-binding</keyword>
<keyword id="KW-0963">Cytoplasm</keyword>
<keyword id="KW-0418">Kinase</keyword>
<keyword id="KW-0547">Nucleotide-binding</keyword>
<keyword id="KW-1185">Reference proteome</keyword>
<keyword id="KW-0808">Transferase</keyword>
<proteinExistence type="inferred from homology"/>
<evidence type="ECO:0000255" key="1">
    <source>
        <dbReference type="HAMAP-Rule" id="MF_00082"/>
    </source>
</evidence>
<sequence length="258" mass="27007">MMNPLIIKLGGVLLDSEEALERLFTALVNYRESHQRPLVIVHGGGCVVDELMKGLNLPVKKKDGLRVTPADQIGIITGALAGTANKTLLAWAKKHHIASVGLFLGDGDSVNVTQLDEALGHVGLAQPGSPKLINMLLENGFLPVVSSIGVTDDGQLMNVNADQAATALAATLGADLILLSDVSGILDGKGQRIAEMTASKAEQLIDQGIITDGMIVKVNAALDAARALGRPVDIASWRHAEQLPALFNGTPIGTRILA</sequence>
<organism>
    <name type="scientific">Salmonella typhimurium (strain LT2 / SGSC1412 / ATCC 700720)</name>
    <dbReference type="NCBI Taxonomy" id="99287"/>
    <lineage>
        <taxon>Bacteria</taxon>
        <taxon>Pseudomonadati</taxon>
        <taxon>Pseudomonadota</taxon>
        <taxon>Gammaproteobacteria</taxon>
        <taxon>Enterobacterales</taxon>
        <taxon>Enterobacteriaceae</taxon>
        <taxon>Salmonella</taxon>
    </lineage>
</organism>
<name>ARGB_SALTY</name>
<reference key="1">
    <citation type="journal article" date="2001" name="Nature">
        <title>Complete genome sequence of Salmonella enterica serovar Typhimurium LT2.</title>
        <authorList>
            <person name="McClelland M."/>
            <person name="Sanderson K.E."/>
            <person name="Spieth J."/>
            <person name="Clifton S.W."/>
            <person name="Latreille P."/>
            <person name="Courtney L."/>
            <person name="Porwollik S."/>
            <person name="Ali J."/>
            <person name="Dante M."/>
            <person name="Du F."/>
            <person name="Hou S."/>
            <person name="Layman D."/>
            <person name="Leonard S."/>
            <person name="Nguyen C."/>
            <person name="Scott K."/>
            <person name="Holmes A."/>
            <person name="Grewal N."/>
            <person name="Mulvaney E."/>
            <person name="Ryan E."/>
            <person name="Sun H."/>
            <person name="Florea L."/>
            <person name="Miller W."/>
            <person name="Stoneking T."/>
            <person name="Nhan M."/>
            <person name="Waterston R."/>
            <person name="Wilson R.K."/>
        </authorList>
    </citation>
    <scope>NUCLEOTIDE SEQUENCE [LARGE SCALE GENOMIC DNA]</scope>
    <source>
        <strain>LT2 / SGSC1412 / ATCC 700720</strain>
    </source>
</reference>
<protein>
    <recommendedName>
        <fullName evidence="1">Acetylglutamate kinase</fullName>
        <ecNumber evidence="1">2.7.2.8</ecNumber>
    </recommendedName>
    <alternativeName>
        <fullName evidence="1">N-acetyl-L-glutamate 5-phosphotransferase</fullName>
    </alternativeName>
    <alternativeName>
        <fullName evidence="1">NAG kinase</fullName>
        <shortName evidence="1">NAGK</shortName>
    </alternativeName>
</protein>
<accession>P63557</accession>
<accession>Q8Z310</accession>
<accession>Q8ZKL7</accession>
<dbReference type="EC" id="2.7.2.8" evidence="1"/>
<dbReference type="EMBL" id="AE006468">
    <property type="protein sequence ID" value="AAL22961.1"/>
    <property type="molecule type" value="Genomic_DNA"/>
</dbReference>
<dbReference type="RefSeq" id="NP_463002.3">
    <property type="nucleotide sequence ID" value="NC_003197.2"/>
</dbReference>
<dbReference type="RefSeq" id="WP_001575262.1">
    <property type="nucleotide sequence ID" value="NC_003197.2"/>
</dbReference>
<dbReference type="SMR" id="P63557"/>
<dbReference type="STRING" id="99287.STM4122"/>
<dbReference type="PaxDb" id="99287-STM4122"/>
<dbReference type="GeneID" id="1255649"/>
<dbReference type="KEGG" id="stm:STM4122"/>
<dbReference type="HOGENOM" id="CLU_053680_1_1_6"/>
<dbReference type="PhylomeDB" id="P63557"/>
<dbReference type="BioCyc" id="SENT99287:STM4122-MONOMER"/>
<dbReference type="UniPathway" id="UPA00068">
    <property type="reaction ID" value="UER00107"/>
</dbReference>
<dbReference type="Proteomes" id="UP000001014">
    <property type="component" value="Chromosome"/>
</dbReference>
<dbReference type="GO" id="GO:0005737">
    <property type="term" value="C:cytoplasm"/>
    <property type="evidence" value="ECO:0007669"/>
    <property type="project" value="UniProtKB-SubCell"/>
</dbReference>
<dbReference type="GO" id="GO:0003991">
    <property type="term" value="F:acetylglutamate kinase activity"/>
    <property type="evidence" value="ECO:0000318"/>
    <property type="project" value="GO_Central"/>
</dbReference>
<dbReference type="GO" id="GO:0005524">
    <property type="term" value="F:ATP binding"/>
    <property type="evidence" value="ECO:0007669"/>
    <property type="project" value="UniProtKB-UniRule"/>
</dbReference>
<dbReference type="GO" id="GO:0042450">
    <property type="term" value="P:arginine biosynthetic process via ornithine"/>
    <property type="evidence" value="ECO:0007669"/>
    <property type="project" value="UniProtKB-UniRule"/>
</dbReference>
<dbReference type="GO" id="GO:0006526">
    <property type="term" value="P:L-arginine biosynthetic process"/>
    <property type="evidence" value="ECO:0000318"/>
    <property type="project" value="GO_Central"/>
</dbReference>
<dbReference type="CDD" id="cd04249">
    <property type="entry name" value="AAK_NAGK-NC"/>
    <property type="match status" value="1"/>
</dbReference>
<dbReference type="FunFam" id="3.40.1160.10:FF:000008">
    <property type="entry name" value="Acetylglutamate kinase"/>
    <property type="match status" value="1"/>
</dbReference>
<dbReference type="Gene3D" id="3.40.1160.10">
    <property type="entry name" value="Acetylglutamate kinase-like"/>
    <property type="match status" value="1"/>
</dbReference>
<dbReference type="HAMAP" id="MF_00082">
    <property type="entry name" value="ArgB"/>
    <property type="match status" value="1"/>
</dbReference>
<dbReference type="InterPro" id="IPR036393">
    <property type="entry name" value="AceGlu_kinase-like_sf"/>
</dbReference>
<dbReference type="InterPro" id="IPR004662">
    <property type="entry name" value="AcgluKinase_fam"/>
</dbReference>
<dbReference type="InterPro" id="IPR037528">
    <property type="entry name" value="ArgB"/>
</dbReference>
<dbReference type="InterPro" id="IPR001048">
    <property type="entry name" value="Asp/Glu/Uridylate_kinase"/>
</dbReference>
<dbReference type="InterPro" id="IPR041731">
    <property type="entry name" value="NAGK-NC"/>
</dbReference>
<dbReference type="NCBIfam" id="TIGR00761">
    <property type="entry name" value="argB"/>
    <property type="match status" value="1"/>
</dbReference>
<dbReference type="PANTHER" id="PTHR23342">
    <property type="entry name" value="N-ACETYLGLUTAMATE SYNTHASE"/>
    <property type="match status" value="1"/>
</dbReference>
<dbReference type="PANTHER" id="PTHR23342:SF0">
    <property type="entry name" value="N-ACETYLGLUTAMATE SYNTHASE, MITOCHONDRIAL"/>
    <property type="match status" value="1"/>
</dbReference>
<dbReference type="Pfam" id="PF00696">
    <property type="entry name" value="AA_kinase"/>
    <property type="match status" value="1"/>
</dbReference>
<dbReference type="PIRSF" id="PIRSF000728">
    <property type="entry name" value="NAGK"/>
    <property type="match status" value="1"/>
</dbReference>
<dbReference type="SUPFAM" id="SSF53633">
    <property type="entry name" value="Carbamate kinase-like"/>
    <property type="match status" value="1"/>
</dbReference>